<gene>
    <name evidence="1" type="primary">aroC</name>
    <name type="ordered locus">BMASAVP1_A1481</name>
</gene>
<organism>
    <name type="scientific">Burkholderia mallei (strain SAVP1)</name>
    <dbReference type="NCBI Taxonomy" id="320388"/>
    <lineage>
        <taxon>Bacteria</taxon>
        <taxon>Pseudomonadati</taxon>
        <taxon>Pseudomonadota</taxon>
        <taxon>Betaproteobacteria</taxon>
        <taxon>Burkholderiales</taxon>
        <taxon>Burkholderiaceae</taxon>
        <taxon>Burkholderia</taxon>
        <taxon>pseudomallei group</taxon>
    </lineage>
</organism>
<accession>A1V3K9</accession>
<keyword id="KW-0028">Amino-acid biosynthesis</keyword>
<keyword id="KW-0057">Aromatic amino acid biosynthesis</keyword>
<keyword id="KW-0274">FAD</keyword>
<keyword id="KW-0285">Flavoprotein</keyword>
<keyword id="KW-0288">FMN</keyword>
<keyword id="KW-0456">Lyase</keyword>
<keyword id="KW-0521">NADP</keyword>
<protein>
    <recommendedName>
        <fullName evidence="1">Chorismate synthase</fullName>
        <shortName evidence="1">CS</shortName>
        <ecNumber evidence="1">4.2.3.5</ecNumber>
    </recommendedName>
    <alternativeName>
        <fullName evidence="1">5-enolpyruvylshikimate-3-phosphate phospholyase</fullName>
    </alternativeName>
</protein>
<name>AROC_BURMS</name>
<comment type="function">
    <text evidence="1">Catalyzes the anti-1,4-elimination of the C-3 phosphate and the C-6 proR hydrogen from 5-enolpyruvylshikimate-3-phosphate (EPSP) to yield chorismate, which is the branch point compound that serves as the starting substrate for the three terminal pathways of aromatic amino acid biosynthesis. This reaction introduces a second double bond into the aromatic ring system.</text>
</comment>
<comment type="catalytic activity">
    <reaction evidence="1">
        <text>5-O-(1-carboxyvinyl)-3-phosphoshikimate = chorismate + phosphate</text>
        <dbReference type="Rhea" id="RHEA:21020"/>
        <dbReference type="ChEBI" id="CHEBI:29748"/>
        <dbReference type="ChEBI" id="CHEBI:43474"/>
        <dbReference type="ChEBI" id="CHEBI:57701"/>
        <dbReference type="EC" id="4.2.3.5"/>
    </reaction>
</comment>
<comment type="cofactor">
    <cofactor evidence="1">
        <name>FMNH2</name>
        <dbReference type="ChEBI" id="CHEBI:57618"/>
    </cofactor>
    <text evidence="1">Reduced FMN (FMNH(2)).</text>
</comment>
<comment type="pathway">
    <text evidence="1">Metabolic intermediate biosynthesis; chorismate biosynthesis; chorismate from D-erythrose 4-phosphate and phosphoenolpyruvate: step 7/7.</text>
</comment>
<comment type="subunit">
    <text evidence="1">Homotetramer.</text>
</comment>
<comment type="similarity">
    <text evidence="1">Belongs to the chorismate synthase family.</text>
</comment>
<comment type="sequence caution" evidence="2">
    <conflict type="erroneous initiation">
        <sequence resource="EMBL-CDS" id="ABM51766"/>
    </conflict>
    <text>Extended N-terminus.</text>
</comment>
<feature type="chain" id="PRO_0000322394" description="Chorismate synthase">
    <location>
        <begin position="1"/>
        <end position="369"/>
    </location>
</feature>
<feature type="binding site" evidence="1">
    <location>
        <position position="48"/>
    </location>
    <ligand>
        <name>NADP(+)</name>
        <dbReference type="ChEBI" id="CHEBI:58349"/>
    </ligand>
</feature>
<feature type="binding site" evidence="1">
    <location>
        <position position="54"/>
    </location>
    <ligand>
        <name>NADP(+)</name>
        <dbReference type="ChEBI" id="CHEBI:58349"/>
    </ligand>
</feature>
<feature type="binding site" evidence="1">
    <location>
        <begin position="125"/>
        <end position="127"/>
    </location>
    <ligand>
        <name>FMN</name>
        <dbReference type="ChEBI" id="CHEBI:58210"/>
    </ligand>
</feature>
<feature type="binding site" evidence="1">
    <location>
        <begin position="238"/>
        <end position="239"/>
    </location>
    <ligand>
        <name>FMN</name>
        <dbReference type="ChEBI" id="CHEBI:58210"/>
    </ligand>
</feature>
<feature type="binding site" evidence="1">
    <location>
        <position position="278"/>
    </location>
    <ligand>
        <name>FMN</name>
        <dbReference type="ChEBI" id="CHEBI:58210"/>
    </ligand>
</feature>
<feature type="binding site" evidence="1">
    <location>
        <begin position="293"/>
        <end position="297"/>
    </location>
    <ligand>
        <name>FMN</name>
        <dbReference type="ChEBI" id="CHEBI:58210"/>
    </ligand>
</feature>
<feature type="binding site" evidence="1">
    <location>
        <position position="319"/>
    </location>
    <ligand>
        <name>FMN</name>
        <dbReference type="ChEBI" id="CHEBI:58210"/>
    </ligand>
</feature>
<reference key="1">
    <citation type="journal article" date="2010" name="Genome Biol. Evol.">
        <title>Continuing evolution of Burkholderia mallei through genome reduction and large-scale rearrangements.</title>
        <authorList>
            <person name="Losada L."/>
            <person name="Ronning C.M."/>
            <person name="DeShazer D."/>
            <person name="Woods D."/>
            <person name="Fedorova N."/>
            <person name="Kim H.S."/>
            <person name="Shabalina S.A."/>
            <person name="Pearson T.R."/>
            <person name="Brinkac L."/>
            <person name="Tan P."/>
            <person name="Nandi T."/>
            <person name="Crabtree J."/>
            <person name="Badger J."/>
            <person name="Beckstrom-Sternberg S."/>
            <person name="Saqib M."/>
            <person name="Schutzer S.E."/>
            <person name="Keim P."/>
            <person name="Nierman W.C."/>
        </authorList>
    </citation>
    <scope>NUCLEOTIDE SEQUENCE [LARGE SCALE GENOMIC DNA]</scope>
    <source>
        <strain>SAVP1</strain>
    </source>
</reference>
<evidence type="ECO:0000255" key="1">
    <source>
        <dbReference type="HAMAP-Rule" id="MF_00300"/>
    </source>
</evidence>
<evidence type="ECO:0000305" key="2"/>
<sequence length="369" mass="39318">MSGNTLGTLFTVTTFGESHGPAIGCVIDGCPPGMALTEADVQLELDRRKPGTSRHVTQRQEPDQVEILSGVFEGVTTGAPIALLIRNTDQRSKDYGNIAETFRPGHADYTYWQKYGVRDYRGGGRSSARLTAPVVGAGAIAKKWLRERFGVEVRGYMSALGEIEIPFVDWSHVRENPFFAPNADIVPQLEDYMDALRKDGDSIGARIDVVASGVPVGWGEPLFDRLDADIAHAMMGINAVKGVEIGAGFASVAQRGSVHGDELTPDGFVGNHAGGVLGGISTGQDITVSIAIKPTSSIRTPRRSITRAGEPAVVETFGRHDPCVGIRATPIAESMLALVLIDHALRHRAQCGDVSSATPRIAARAPDAQ</sequence>
<proteinExistence type="inferred from homology"/>
<dbReference type="EC" id="4.2.3.5" evidence="1"/>
<dbReference type="EMBL" id="CP000526">
    <property type="protein sequence ID" value="ABM51766.1"/>
    <property type="status" value="ALT_INIT"/>
    <property type="molecule type" value="Genomic_DNA"/>
</dbReference>
<dbReference type="RefSeq" id="WP_004266572.1">
    <property type="nucleotide sequence ID" value="NC_008785.1"/>
</dbReference>
<dbReference type="SMR" id="A1V3K9"/>
<dbReference type="GeneID" id="92978703"/>
<dbReference type="KEGG" id="bmv:BMASAVP1_A1481"/>
<dbReference type="HOGENOM" id="CLU_034547_0_2_4"/>
<dbReference type="UniPathway" id="UPA00053">
    <property type="reaction ID" value="UER00090"/>
</dbReference>
<dbReference type="GO" id="GO:0005829">
    <property type="term" value="C:cytosol"/>
    <property type="evidence" value="ECO:0007669"/>
    <property type="project" value="TreeGrafter"/>
</dbReference>
<dbReference type="GO" id="GO:0004107">
    <property type="term" value="F:chorismate synthase activity"/>
    <property type="evidence" value="ECO:0007669"/>
    <property type="project" value="UniProtKB-UniRule"/>
</dbReference>
<dbReference type="GO" id="GO:0010181">
    <property type="term" value="F:FMN binding"/>
    <property type="evidence" value="ECO:0007669"/>
    <property type="project" value="TreeGrafter"/>
</dbReference>
<dbReference type="GO" id="GO:0008652">
    <property type="term" value="P:amino acid biosynthetic process"/>
    <property type="evidence" value="ECO:0007669"/>
    <property type="project" value="UniProtKB-KW"/>
</dbReference>
<dbReference type="GO" id="GO:0009073">
    <property type="term" value="P:aromatic amino acid family biosynthetic process"/>
    <property type="evidence" value="ECO:0007669"/>
    <property type="project" value="UniProtKB-KW"/>
</dbReference>
<dbReference type="GO" id="GO:0009423">
    <property type="term" value="P:chorismate biosynthetic process"/>
    <property type="evidence" value="ECO:0007669"/>
    <property type="project" value="UniProtKB-UniRule"/>
</dbReference>
<dbReference type="CDD" id="cd07304">
    <property type="entry name" value="Chorismate_synthase"/>
    <property type="match status" value="1"/>
</dbReference>
<dbReference type="FunFam" id="3.60.150.10:FF:000001">
    <property type="entry name" value="Chorismate synthase"/>
    <property type="match status" value="1"/>
</dbReference>
<dbReference type="Gene3D" id="3.60.150.10">
    <property type="entry name" value="Chorismate synthase AroC"/>
    <property type="match status" value="1"/>
</dbReference>
<dbReference type="HAMAP" id="MF_00300">
    <property type="entry name" value="Chorismate_synth"/>
    <property type="match status" value="1"/>
</dbReference>
<dbReference type="InterPro" id="IPR000453">
    <property type="entry name" value="Chorismate_synth"/>
</dbReference>
<dbReference type="InterPro" id="IPR035904">
    <property type="entry name" value="Chorismate_synth_AroC_sf"/>
</dbReference>
<dbReference type="InterPro" id="IPR020541">
    <property type="entry name" value="Chorismate_synthase_CS"/>
</dbReference>
<dbReference type="NCBIfam" id="TIGR00033">
    <property type="entry name" value="aroC"/>
    <property type="match status" value="1"/>
</dbReference>
<dbReference type="NCBIfam" id="NF003793">
    <property type="entry name" value="PRK05382.1"/>
    <property type="match status" value="1"/>
</dbReference>
<dbReference type="PANTHER" id="PTHR21085">
    <property type="entry name" value="CHORISMATE SYNTHASE"/>
    <property type="match status" value="1"/>
</dbReference>
<dbReference type="PANTHER" id="PTHR21085:SF0">
    <property type="entry name" value="CHORISMATE SYNTHASE"/>
    <property type="match status" value="1"/>
</dbReference>
<dbReference type="Pfam" id="PF01264">
    <property type="entry name" value="Chorismate_synt"/>
    <property type="match status" value="1"/>
</dbReference>
<dbReference type="PIRSF" id="PIRSF001456">
    <property type="entry name" value="Chorismate_synth"/>
    <property type="match status" value="1"/>
</dbReference>
<dbReference type="SUPFAM" id="SSF103263">
    <property type="entry name" value="Chorismate synthase, AroC"/>
    <property type="match status" value="1"/>
</dbReference>
<dbReference type="PROSITE" id="PS00787">
    <property type="entry name" value="CHORISMATE_SYNTHASE_1"/>
    <property type="match status" value="1"/>
</dbReference>
<dbReference type="PROSITE" id="PS00788">
    <property type="entry name" value="CHORISMATE_SYNTHASE_2"/>
    <property type="match status" value="1"/>
</dbReference>
<dbReference type="PROSITE" id="PS00789">
    <property type="entry name" value="CHORISMATE_SYNTHASE_3"/>
    <property type="match status" value="1"/>
</dbReference>